<proteinExistence type="evidence at transcript level"/>
<gene>
    <name type="ordered locus">Os10g0114500</name>
    <name type="ordered locus">LOC_Os10g02509</name>
    <name type="ORF">OJ1014H12.2</name>
    <name type="ORF">OsJ_30525</name>
    <name type="ORF">OSJNBa0092N12.11</name>
</gene>
<keyword id="KW-0238">DNA-binding</keyword>
<keyword id="KW-0539">Nucleus</keyword>
<keyword id="KW-1185">Reference proteome</keyword>
<keyword id="KW-0804">Transcription</keyword>
<keyword id="KW-0805">Transcription regulation</keyword>
<name>BBRA_ORYSJ</name>
<organism>
    <name type="scientific">Oryza sativa subsp. japonica</name>
    <name type="common">Rice</name>
    <dbReference type="NCBI Taxonomy" id="39947"/>
    <lineage>
        <taxon>Eukaryota</taxon>
        <taxon>Viridiplantae</taxon>
        <taxon>Streptophyta</taxon>
        <taxon>Embryophyta</taxon>
        <taxon>Tracheophyta</taxon>
        <taxon>Spermatophyta</taxon>
        <taxon>Magnoliopsida</taxon>
        <taxon>Liliopsida</taxon>
        <taxon>Poales</taxon>
        <taxon>Poaceae</taxon>
        <taxon>BOP clade</taxon>
        <taxon>Oryzoideae</taxon>
        <taxon>Oryzeae</taxon>
        <taxon>Oryzinae</taxon>
        <taxon>Oryza</taxon>
        <taxon>Oryza sativa</taxon>
    </lineage>
</organism>
<comment type="function">
    <text evidence="1">Transcriptional regulator that specifically binds to GA-rich elements (GAGA-repeats) present in regulatory sequences of genes involved in developmental processes.</text>
</comment>
<comment type="subcellular location">
    <subcellularLocation>
        <location evidence="1">Nucleus</location>
    </subcellularLocation>
</comment>
<comment type="similarity">
    <text evidence="3">Belongs to the BBR/BPC family.</text>
</comment>
<comment type="sequence caution" evidence="3">
    <conflict type="erroneous gene model prediction">
        <sequence resource="EMBL-CDS" id="AAK52543"/>
    </conflict>
</comment>
<comment type="sequence caution" evidence="3">
    <conflict type="erroneous gene model prediction">
        <sequence resource="EMBL-CDS" id="AAM44863"/>
    </conflict>
</comment>
<protein>
    <recommendedName>
        <fullName>Barley B recombinant-like protein A</fullName>
        <shortName>BBR-like protein A</shortName>
    </recommendedName>
    <alternativeName>
        <fullName>GAGA-binding transcriptional activator BBR-A</fullName>
    </alternativeName>
</protein>
<evidence type="ECO:0000250" key="1"/>
<evidence type="ECO:0000256" key="2">
    <source>
        <dbReference type="SAM" id="MobiDB-lite"/>
    </source>
</evidence>
<evidence type="ECO:0000305" key="3"/>
<reference key="1">
    <citation type="journal article" date="2003" name="Plant J.">
        <title>The GA octodinucleotide repeat binding factor BBR participates in the transcriptional regulation of the homeobox gene Bkn3.</title>
        <authorList>
            <person name="Santi L."/>
            <person name="Wang Y."/>
            <person name="Stile M.R."/>
            <person name="Berendzen K.W."/>
            <person name="Wanke D."/>
            <person name="Roig C."/>
            <person name="Pozzi C."/>
            <person name="Mueller K."/>
            <person name="Mueller J."/>
            <person name="Rohde W."/>
            <person name="Salamini F."/>
        </authorList>
    </citation>
    <scope>NUCLEOTIDE SEQUENCE [MRNA]</scope>
</reference>
<reference key="2">
    <citation type="journal article" date="2003" name="Science">
        <title>In-depth view of structure, activity, and evolution of rice chromosome 10.</title>
        <authorList>
            <person name="Yu Y."/>
            <person name="Rambo T."/>
            <person name="Currie J."/>
            <person name="Saski C."/>
            <person name="Kim H.-R."/>
            <person name="Collura K."/>
            <person name="Thompson S."/>
            <person name="Simmons J."/>
            <person name="Yang T.-J."/>
            <person name="Nah G."/>
            <person name="Patel A.J."/>
            <person name="Thurmond S."/>
            <person name="Henry D."/>
            <person name="Oates R."/>
            <person name="Palmer M."/>
            <person name="Pries G."/>
            <person name="Gibson J."/>
            <person name="Anderson H."/>
            <person name="Paradkar M."/>
            <person name="Crane L."/>
            <person name="Dale J."/>
            <person name="Carver M.B."/>
            <person name="Wood T."/>
            <person name="Frisch D."/>
            <person name="Engler F."/>
            <person name="Soderlund C."/>
            <person name="Palmer L.E."/>
            <person name="Teytelman L."/>
            <person name="Nascimento L."/>
            <person name="De la Bastide M."/>
            <person name="Spiegel L."/>
            <person name="Ware D."/>
            <person name="O'Shaughnessy A."/>
            <person name="Dike S."/>
            <person name="Dedhia N."/>
            <person name="Preston R."/>
            <person name="Huang E."/>
            <person name="Ferraro K."/>
            <person name="Kuit K."/>
            <person name="Miller B."/>
            <person name="Zutavern T."/>
            <person name="Katzenberger F."/>
            <person name="Muller S."/>
            <person name="Balija V."/>
            <person name="Martienssen R.A."/>
            <person name="Stein L."/>
            <person name="Minx P."/>
            <person name="Johnson D."/>
            <person name="Cordum H."/>
            <person name="Mardis E."/>
            <person name="Cheng Z."/>
            <person name="Jiang J."/>
            <person name="Wilson R."/>
            <person name="McCombie W.R."/>
            <person name="Wing R.A."/>
            <person name="Yuan Q."/>
            <person name="Ouyang S."/>
            <person name="Liu J."/>
            <person name="Jones K.M."/>
            <person name="Gansberger K."/>
            <person name="Moffat K."/>
            <person name="Hill J."/>
            <person name="Tsitrin T."/>
            <person name="Overton L."/>
            <person name="Bera J."/>
            <person name="Kim M."/>
            <person name="Jin S."/>
            <person name="Tallon L."/>
            <person name="Ciecko A."/>
            <person name="Pai G."/>
            <person name="Van Aken S."/>
            <person name="Utterback T."/>
            <person name="Reidmuller S."/>
            <person name="Bormann J."/>
            <person name="Feldblyum T."/>
            <person name="Hsiao J."/>
            <person name="Zismann V."/>
            <person name="Blunt S."/>
            <person name="de Vazeille A.R."/>
            <person name="Shaffer T."/>
            <person name="Koo H."/>
            <person name="Suh B."/>
            <person name="Yang Q."/>
            <person name="Haas B."/>
            <person name="Peterson J."/>
            <person name="Pertea M."/>
            <person name="Volfovsky N."/>
            <person name="Wortman J."/>
            <person name="White O."/>
            <person name="Salzberg S.L."/>
            <person name="Fraser C.M."/>
            <person name="Buell C.R."/>
            <person name="Messing J."/>
            <person name="Song R."/>
            <person name="Fuks G."/>
            <person name="Llaca V."/>
            <person name="Kovchak S."/>
            <person name="Young S."/>
            <person name="Bowers J.E."/>
            <person name="Paterson A.H."/>
            <person name="Johns M.A."/>
            <person name="Mao L."/>
            <person name="Pan H."/>
            <person name="Dean R.A."/>
        </authorList>
    </citation>
    <scope>NUCLEOTIDE SEQUENCE [LARGE SCALE GENOMIC DNA]</scope>
    <source>
        <strain>cv. Nipponbare</strain>
    </source>
</reference>
<reference key="3">
    <citation type="journal article" date="2005" name="Nature">
        <title>The map-based sequence of the rice genome.</title>
        <authorList>
            <consortium name="International rice genome sequencing project (IRGSP)"/>
        </authorList>
    </citation>
    <scope>NUCLEOTIDE SEQUENCE [LARGE SCALE GENOMIC DNA]</scope>
    <source>
        <strain>cv. Nipponbare</strain>
    </source>
</reference>
<reference key="4">
    <citation type="journal article" date="2008" name="Nucleic Acids Res.">
        <title>The rice annotation project database (RAP-DB): 2008 update.</title>
        <authorList>
            <consortium name="The rice annotation project (RAP)"/>
        </authorList>
    </citation>
    <scope>GENOME REANNOTATION</scope>
    <source>
        <strain>cv. Nipponbare</strain>
    </source>
</reference>
<reference key="5">
    <citation type="journal article" date="2013" name="Rice">
        <title>Improvement of the Oryza sativa Nipponbare reference genome using next generation sequence and optical map data.</title>
        <authorList>
            <person name="Kawahara Y."/>
            <person name="de la Bastide M."/>
            <person name="Hamilton J.P."/>
            <person name="Kanamori H."/>
            <person name="McCombie W.R."/>
            <person name="Ouyang S."/>
            <person name="Schwartz D.C."/>
            <person name="Tanaka T."/>
            <person name="Wu J."/>
            <person name="Zhou S."/>
            <person name="Childs K.L."/>
            <person name="Davidson R.M."/>
            <person name="Lin H."/>
            <person name="Quesada-Ocampo L."/>
            <person name="Vaillancourt B."/>
            <person name="Sakai H."/>
            <person name="Lee S.S."/>
            <person name="Kim J."/>
            <person name="Numa H."/>
            <person name="Itoh T."/>
            <person name="Buell C.R."/>
            <person name="Matsumoto T."/>
        </authorList>
    </citation>
    <scope>GENOME REANNOTATION</scope>
    <source>
        <strain>cv. Nipponbare</strain>
    </source>
</reference>
<reference key="6">
    <citation type="journal article" date="2005" name="PLoS Biol.">
        <title>The genomes of Oryza sativa: a history of duplications.</title>
        <authorList>
            <person name="Yu J."/>
            <person name="Wang J."/>
            <person name="Lin W."/>
            <person name="Li S."/>
            <person name="Li H."/>
            <person name="Zhou J."/>
            <person name="Ni P."/>
            <person name="Dong W."/>
            <person name="Hu S."/>
            <person name="Zeng C."/>
            <person name="Zhang J."/>
            <person name="Zhang Y."/>
            <person name="Li R."/>
            <person name="Xu Z."/>
            <person name="Li S."/>
            <person name="Li X."/>
            <person name="Zheng H."/>
            <person name="Cong L."/>
            <person name="Lin L."/>
            <person name="Yin J."/>
            <person name="Geng J."/>
            <person name="Li G."/>
            <person name="Shi J."/>
            <person name="Liu J."/>
            <person name="Lv H."/>
            <person name="Li J."/>
            <person name="Wang J."/>
            <person name="Deng Y."/>
            <person name="Ran L."/>
            <person name="Shi X."/>
            <person name="Wang X."/>
            <person name="Wu Q."/>
            <person name="Li C."/>
            <person name="Ren X."/>
            <person name="Wang J."/>
            <person name="Wang X."/>
            <person name="Li D."/>
            <person name="Liu D."/>
            <person name="Zhang X."/>
            <person name="Ji Z."/>
            <person name="Zhao W."/>
            <person name="Sun Y."/>
            <person name="Zhang Z."/>
            <person name="Bao J."/>
            <person name="Han Y."/>
            <person name="Dong L."/>
            <person name="Ji J."/>
            <person name="Chen P."/>
            <person name="Wu S."/>
            <person name="Liu J."/>
            <person name="Xiao Y."/>
            <person name="Bu D."/>
            <person name="Tan J."/>
            <person name="Yang L."/>
            <person name="Ye C."/>
            <person name="Zhang J."/>
            <person name="Xu J."/>
            <person name="Zhou Y."/>
            <person name="Yu Y."/>
            <person name="Zhang B."/>
            <person name="Zhuang S."/>
            <person name="Wei H."/>
            <person name="Liu B."/>
            <person name="Lei M."/>
            <person name="Yu H."/>
            <person name="Li Y."/>
            <person name="Xu H."/>
            <person name="Wei S."/>
            <person name="He X."/>
            <person name="Fang L."/>
            <person name="Zhang Z."/>
            <person name="Zhang Y."/>
            <person name="Huang X."/>
            <person name="Su Z."/>
            <person name="Tong W."/>
            <person name="Li J."/>
            <person name="Tong Z."/>
            <person name="Li S."/>
            <person name="Ye J."/>
            <person name="Wang L."/>
            <person name="Fang L."/>
            <person name="Lei T."/>
            <person name="Chen C.-S."/>
            <person name="Chen H.-C."/>
            <person name="Xu Z."/>
            <person name="Li H."/>
            <person name="Huang H."/>
            <person name="Zhang F."/>
            <person name="Xu H."/>
            <person name="Li N."/>
            <person name="Zhao C."/>
            <person name="Li S."/>
            <person name="Dong L."/>
            <person name="Huang Y."/>
            <person name="Li L."/>
            <person name="Xi Y."/>
            <person name="Qi Q."/>
            <person name="Li W."/>
            <person name="Zhang B."/>
            <person name="Hu W."/>
            <person name="Zhang Y."/>
            <person name="Tian X."/>
            <person name="Jiao Y."/>
            <person name="Liang X."/>
            <person name="Jin J."/>
            <person name="Gao L."/>
            <person name="Zheng W."/>
            <person name="Hao B."/>
            <person name="Liu S.-M."/>
            <person name="Wang W."/>
            <person name="Yuan L."/>
            <person name="Cao M."/>
            <person name="McDermott J."/>
            <person name="Samudrala R."/>
            <person name="Wang J."/>
            <person name="Wong G.K.-S."/>
            <person name="Yang H."/>
        </authorList>
    </citation>
    <scope>NUCLEOTIDE SEQUENCE [LARGE SCALE GENOMIC DNA]</scope>
    <source>
        <strain>cv. Nipponbare</strain>
    </source>
</reference>
<reference key="7">
    <citation type="journal article" date="2003" name="Science">
        <title>Collection, mapping, and annotation of over 28,000 cDNA clones from japonica rice.</title>
        <authorList>
            <consortium name="The rice full-length cDNA consortium"/>
        </authorList>
    </citation>
    <scope>NUCLEOTIDE SEQUENCE [LARGE SCALE MRNA]</scope>
    <source>
        <strain>cv. Nipponbare</strain>
    </source>
</reference>
<sequence>MDDDASMSIRWGGFFESPARNLGLQLMSSVPAERDTKQLLSGSPFLHHQHQQHVPHHHHQPHHPRDCGANGNANGGAMPPPPATEAPPSMPMNFARSDMWMHPQQQQQHHHPREHKALHNLTVGHGSSHIAHHDPVGYGMIPGTHTLQMMQQQTEPQLQPPPPPQQPKEECISSPLIEENVPVIDEPPPPKKRQQGRQPKVPRAKKPKKSAAPREDGAPPNAPAPRRRGPRKNIGMVINGIDLDLSRIPTPICSCTGAPQQCYRWGAGGWQSACCTTTISTYPLPMSTKRRGARIAGRKMSHGAFKKVLEKLAGEGYNLNNPIDLKTFWAKHGTNKFVTIR</sequence>
<accession>P0DH88</accession>
<accession>H2KX85</accession>
<accession>Q6Q0M8</accession>
<accession>Q7G769</accession>
<accession>Q93VZ9</accession>
<dbReference type="EMBL" id="AY569035">
    <property type="protein sequence ID" value="AAS75865.1"/>
    <property type="molecule type" value="mRNA"/>
</dbReference>
<dbReference type="EMBL" id="AC078891">
    <property type="protein sequence ID" value="AAK52543.1"/>
    <property type="status" value="ALT_SEQ"/>
    <property type="molecule type" value="Genomic_DNA"/>
</dbReference>
<dbReference type="EMBL" id="AC098694">
    <property type="protein sequence ID" value="AAM44863.1"/>
    <property type="status" value="ALT_SEQ"/>
    <property type="molecule type" value="Genomic_DNA"/>
</dbReference>
<dbReference type="EMBL" id="DP000086">
    <property type="protein sequence ID" value="ABB46625.1"/>
    <property type="molecule type" value="Genomic_DNA"/>
</dbReference>
<dbReference type="EMBL" id="DP000086">
    <property type="protein sequence ID" value="ABB46626.1"/>
    <property type="molecule type" value="Genomic_DNA"/>
</dbReference>
<dbReference type="EMBL" id="DP000086">
    <property type="protein sequence ID" value="ABG65888.1"/>
    <property type="molecule type" value="Genomic_DNA"/>
</dbReference>
<dbReference type="EMBL" id="AP008216">
    <property type="protein sequence ID" value="BAF25962.1"/>
    <property type="molecule type" value="Genomic_DNA"/>
</dbReference>
<dbReference type="EMBL" id="AP014966">
    <property type="protein sequence ID" value="BAT09654.1"/>
    <property type="molecule type" value="Genomic_DNA"/>
</dbReference>
<dbReference type="EMBL" id="CM000147">
    <property type="protein sequence ID" value="EEE50474.1"/>
    <property type="molecule type" value="Genomic_DNA"/>
</dbReference>
<dbReference type="EMBL" id="AK063643">
    <property type="status" value="NOT_ANNOTATED_CDS"/>
    <property type="molecule type" value="mRNA"/>
</dbReference>
<dbReference type="FunCoup" id="P0DH88">
    <property type="interactions" value="1084"/>
</dbReference>
<dbReference type="PaxDb" id="39947-P0DH88"/>
<dbReference type="EnsemblPlants" id="Os10t0114500-01">
    <property type="protein sequence ID" value="Os10t0114500-01"/>
    <property type="gene ID" value="Os10g0114500"/>
</dbReference>
<dbReference type="EnsemblPlants" id="Os10t0115200-01">
    <property type="protein sequence ID" value="Os10t0115200-01"/>
    <property type="gene ID" value="Os10g0115200"/>
</dbReference>
<dbReference type="Gramene" id="Os10t0114500-01">
    <property type="protein sequence ID" value="Os10t0114500-01"/>
    <property type="gene ID" value="Os10g0114500"/>
</dbReference>
<dbReference type="Gramene" id="Os10t0115200-01">
    <property type="protein sequence ID" value="Os10t0115200-01"/>
    <property type="gene ID" value="Os10g0115200"/>
</dbReference>
<dbReference type="KEGG" id="dosa:Os10g0114500"/>
<dbReference type="KEGG" id="osa:4347983"/>
<dbReference type="KEGG" id="osa:9268674"/>
<dbReference type="eggNOG" id="ENOG502QSGE">
    <property type="taxonomic scope" value="Eukaryota"/>
</dbReference>
<dbReference type="HOGENOM" id="CLU_039119_2_0_1"/>
<dbReference type="InParanoid" id="P0DH88"/>
<dbReference type="OMA" id="SANHPYL"/>
<dbReference type="OrthoDB" id="1903765at2759"/>
<dbReference type="Proteomes" id="UP000000763">
    <property type="component" value="Chromosome 10"/>
</dbReference>
<dbReference type="Proteomes" id="UP000007752">
    <property type="component" value="Chromosome 10"/>
</dbReference>
<dbReference type="Proteomes" id="UP000059680">
    <property type="component" value="Chromosome 10"/>
</dbReference>
<dbReference type="ExpressionAtlas" id="P0DH88">
    <property type="expression patterns" value="baseline"/>
</dbReference>
<dbReference type="GO" id="GO:0005634">
    <property type="term" value="C:nucleus"/>
    <property type="evidence" value="ECO:0000318"/>
    <property type="project" value="GO_Central"/>
</dbReference>
<dbReference type="GO" id="GO:0003700">
    <property type="term" value="F:DNA-binding transcription factor activity"/>
    <property type="evidence" value="ECO:0000318"/>
    <property type="project" value="GO_Central"/>
</dbReference>
<dbReference type="GO" id="GO:0043565">
    <property type="term" value="F:sequence-specific DNA binding"/>
    <property type="evidence" value="ECO:0000318"/>
    <property type="project" value="GO_Central"/>
</dbReference>
<dbReference type="GO" id="GO:0009723">
    <property type="term" value="P:response to ethylene"/>
    <property type="evidence" value="ECO:0000318"/>
    <property type="project" value="GO_Central"/>
</dbReference>
<dbReference type="InterPro" id="IPR010409">
    <property type="entry name" value="GAGA-bd_tscrpt_act"/>
</dbReference>
<dbReference type="PANTHER" id="PTHR31421">
    <property type="entry name" value="PROTEIN BASIC PENTACYSTEINE3"/>
    <property type="match status" value="1"/>
</dbReference>
<dbReference type="PANTHER" id="PTHR31421:SF22">
    <property type="entry name" value="PROTEIN BASIC PENTACYSTEINE3"/>
    <property type="match status" value="1"/>
</dbReference>
<dbReference type="Pfam" id="PF06217">
    <property type="entry name" value="GAGA_bind"/>
    <property type="match status" value="1"/>
</dbReference>
<dbReference type="SMART" id="SM01226">
    <property type="entry name" value="GAGA_bind"/>
    <property type="match status" value="1"/>
</dbReference>
<feature type="chain" id="PRO_0000413443" description="Barley B recombinant-like protein A">
    <location>
        <begin position="1"/>
        <end position="341"/>
    </location>
</feature>
<feature type="region of interest" description="Disordered" evidence="2">
    <location>
        <begin position="48"/>
        <end position="95"/>
    </location>
</feature>
<feature type="region of interest" description="Disordered" evidence="2">
    <location>
        <begin position="150"/>
        <end position="234"/>
    </location>
</feature>
<feature type="compositionally biased region" description="Basic residues" evidence="2">
    <location>
        <begin position="48"/>
        <end position="62"/>
    </location>
</feature>
<feature type="compositionally biased region" description="Low complexity" evidence="2">
    <location>
        <begin position="68"/>
        <end position="77"/>
    </location>
</feature>
<feature type="compositionally biased region" description="Pro residues" evidence="2">
    <location>
        <begin position="78"/>
        <end position="90"/>
    </location>
</feature>
<feature type="compositionally biased region" description="Basic residues" evidence="2">
    <location>
        <begin position="190"/>
        <end position="211"/>
    </location>
</feature>